<proteinExistence type="inferred from homology"/>
<reference key="1">
    <citation type="journal article" date="2006" name="Proc. Natl. Acad. Sci. U.S.A.">
        <title>Evolution of sensory complexity recorded in a myxobacterial genome.</title>
        <authorList>
            <person name="Goldman B.S."/>
            <person name="Nierman W.C."/>
            <person name="Kaiser D."/>
            <person name="Slater S.C."/>
            <person name="Durkin A.S."/>
            <person name="Eisen J.A."/>
            <person name="Ronning C.M."/>
            <person name="Barbazuk W.B."/>
            <person name="Blanchard M."/>
            <person name="Field C."/>
            <person name="Halling C."/>
            <person name="Hinkle G."/>
            <person name="Iartchuk O."/>
            <person name="Kim H.S."/>
            <person name="Mackenzie C."/>
            <person name="Madupu R."/>
            <person name="Miller N."/>
            <person name="Shvartsbeyn A."/>
            <person name="Sullivan S.A."/>
            <person name="Vaudin M."/>
            <person name="Wiegand R."/>
            <person name="Kaplan H.B."/>
        </authorList>
    </citation>
    <scope>NUCLEOTIDE SEQUENCE [LARGE SCALE GENOMIC DNA]</scope>
    <source>
        <strain>DK1622</strain>
    </source>
</reference>
<feature type="chain" id="PRO_0000335491" description="Translation initiation factor IF-2">
    <location>
        <begin position="1"/>
        <end position="1072"/>
    </location>
</feature>
<feature type="domain" description="tr-type G">
    <location>
        <begin position="570"/>
        <end position="737"/>
    </location>
</feature>
<feature type="region of interest" description="Disordered" evidence="3">
    <location>
        <begin position="55"/>
        <end position="369"/>
    </location>
</feature>
<feature type="region of interest" description="Disordered" evidence="3">
    <location>
        <begin position="426"/>
        <end position="452"/>
    </location>
</feature>
<feature type="region of interest" description="G1" evidence="1">
    <location>
        <begin position="579"/>
        <end position="586"/>
    </location>
</feature>
<feature type="region of interest" description="G2" evidence="1">
    <location>
        <begin position="604"/>
        <end position="608"/>
    </location>
</feature>
<feature type="region of interest" description="G3" evidence="1">
    <location>
        <begin position="625"/>
        <end position="628"/>
    </location>
</feature>
<feature type="region of interest" description="G4" evidence="1">
    <location>
        <begin position="679"/>
        <end position="682"/>
    </location>
</feature>
<feature type="region of interest" description="G5" evidence="1">
    <location>
        <begin position="715"/>
        <end position="717"/>
    </location>
</feature>
<feature type="compositionally biased region" description="Low complexity" evidence="3">
    <location>
        <begin position="91"/>
        <end position="100"/>
    </location>
</feature>
<feature type="compositionally biased region" description="Low complexity" evidence="3">
    <location>
        <begin position="108"/>
        <end position="118"/>
    </location>
</feature>
<feature type="compositionally biased region" description="Low complexity" evidence="3">
    <location>
        <begin position="126"/>
        <end position="179"/>
    </location>
</feature>
<feature type="compositionally biased region" description="Low complexity" evidence="3">
    <location>
        <begin position="186"/>
        <end position="212"/>
    </location>
</feature>
<feature type="compositionally biased region" description="Pro residues" evidence="3">
    <location>
        <begin position="218"/>
        <end position="230"/>
    </location>
</feature>
<feature type="compositionally biased region" description="Low complexity" evidence="3">
    <location>
        <begin position="231"/>
        <end position="245"/>
    </location>
</feature>
<feature type="compositionally biased region" description="Gly residues" evidence="3">
    <location>
        <begin position="253"/>
        <end position="307"/>
    </location>
</feature>
<feature type="compositionally biased region" description="Basic and acidic residues" evidence="3">
    <location>
        <begin position="426"/>
        <end position="436"/>
    </location>
</feature>
<feature type="binding site" evidence="2">
    <location>
        <begin position="579"/>
        <end position="586"/>
    </location>
    <ligand>
        <name>GTP</name>
        <dbReference type="ChEBI" id="CHEBI:37565"/>
    </ligand>
</feature>
<feature type="binding site" evidence="2">
    <location>
        <begin position="625"/>
        <end position="629"/>
    </location>
    <ligand>
        <name>GTP</name>
        <dbReference type="ChEBI" id="CHEBI:37565"/>
    </ligand>
</feature>
<feature type="binding site" evidence="2">
    <location>
        <begin position="679"/>
        <end position="682"/>
    </location>
    <ligand>
        <name>GTP</name>
        <dbReference type="ChEBI" id="CHEBI:37565"/>
    </ligand>
</feature>
<organism>
    <name type="scientific">Myxococcus xanthus (strain DK1622)</name>
    <dbReference type="NCBI Taxonomy" id="246197"/>
    <lineage>
        <taxon>Bacteria</taxon>
        <taxon>Pseudomonadati</taxon>
        <taxon>Myxococcota</taxon>
        <taxon>Myxococcia</taxon>
        <taxon>Myxococcales</taxon>
        <taxon>Cystobacterineae</taxon>
        <taxon>Myxococcaceae</taxon>
        <taxon>Myxococcus</taxon>
    </lineage>
</organism>
<accession>Q1DAM6</accession>
<protein>
    <recommendedName>
        <fullName evidence="2">Translation initiation factor IF-2</fullName>
    </recommendedName>
</protein>
<sequence length="1072" mass="111900">MSKKRVHEIAKELKSHGIELDNKEVVTELSSLGYDVKSHSSSLDDDQATAAVQKILDKRKPKQATPPVTAKGFVVRRKVGPPAGATADSGAEASQAAEPAYEPPSAPEPATFAAEEPVQAPPPVEAPRAPVEAPSAPEPQRVEAPVAAATEPTAPAAVTSTPPAQVAEATKAPAAAEVASPPPAAEAPQAPVEAPRAAVPAPAAAQPRPSVQESTTLPQPPPRSPVPPAVRTPSSTSSSATVVSRGPAPGYQQRGGPGGGRPGGPGGPGGRPGGPGGPGGRPGGPGGPGGRPGGPGGPGGRPGGPGGRPSYQGPGSYQGAGRPGQGPVRPTSAPGTGVQASASASPIPQGPTIMVGGVPHAQVSPTGTARPTATQAVVISRPLIQVRRVTPTAGQAKQYPMAPGRTGIPERREYKVVPDHLGRGRELVDVSKNKERGQRKRTSGDTQSVSKQELTDMVWGRVTIPIRGKKRKPTKKGAKTQITQMAEEKKVIKLQEGISVSDLGQRMGVRSAELIKKLMGLGKMATANQLVDADTAEMIAGDYGWKIDRVGFEVEDYLPEVETRPEDERPRPPVVAIMGHVDHGKTSLLDAIRKASVAQGEAGGITQHIGAYSITTARGDVTFLDTPGHEAFTSMRARGADVTDIVVLVVASDDGVMPQTVEAIKHAKAAEVPIVVAINKMDLPTANLDRVKKDLATHELVPEEWGGDTIMVPVSAKTKENLELLLENLALQAEVLELASNPLRPSVGAIIEAKLDRGRGPVATVLVQEGTLKLGDAVVTGSHYGRVRAMTNSRGEQVKEVKPGYCAEVVGLSGVPGAGDAINVVADEKAAKQIAEHRNMKERQTELSKVSRESLEQLFAKTKAGGGPKELRVVIKADVQGSAEAVKQAVQKLSTHKVKVEVVHSGVGAITEGDVMRAAASKGVVLGFNVNPESGAEAAAKAQEVVLKSYSIIYELIDGVRTEMEGLLEPIRTERKLGRAEVRNTFNVPRLGTIAGAAVLDGVMKRGAIVRLMRENKQLFSGKMASLRRFKDDVKEVAQGFECGIGIESFNDLKPGDIIEAYEIVETRQSLT</sequence>
<evidence type="ECO:0000250" key="1"/>
<evidence type="ECO:0000255" key="2">
    <source>
        <dbReference type="HAMAP-Rule" id="MF_00100"/>
    </source>
</evidence>
<evidence type="ECO:0000256" key="3">
    <source>
        <dbReference type="SAM" id="MobiDB-lite"/>
    </source>
</evidence>
<dbReference type="EMBL" id="CP000113">
    <property type="protein sequence ID" value="ABF88832.1"/>
    <property type="molecule type" value="Genomic_DNA"/>
</dbReference>
<dbReference type="RefSeq" id="WP_011552152.1">
    <property type="nucleotide sequence ID" value="NC_008095.1"/>
</dbReference>
<dbReference type="SMR" id="Q1DAM6"/>
<dbReference type="STRING" id="246197.MXAN_2068"/>
<dbReference type="EnsemblBacteria" id="ABF88832">
    <property type="protein sequence ID" value="ABF88832"/>
    <property type="gene ID" value="MXAN_2068"/>
</dbReference>
<dbReference type="GeneID" id="41359476"/>
<dbReference type="KEGG" id="mxa:MXAN_2068"/>
<dbReference type="eggNOG" id="COG0532">
    <property type="taxonomic scope" value="Bacteria"/>
</dbReference>
<dbReference type="HOGENOM" id="CLU_006301_9_3_7"/>
<dbReference type="OrthoDB" id="9811804at2"/>
<dbReference type="Proteomes" id="UP000002402">
    <property type="component" value="Chromosome"/>
</dbReference>
<dbReference type="GO" id="GO:0005829">
    <property type="term" value="C:cytosol"/>
    <property type="evidence" value="ECO:0007669"/>
    <property type="project" value="TreeGrafter"/>
</dbReference>
<dbReference type="GO" id="GO:0005525">
    <property type="term" value="F:GTP binding"/>
    <property type="evidence" value="ECO:0007669"/>
    <property type="project" value="UniProtKB-KW"/>
</dbReference>
<dbReference type="GO" id="GO:0003924">
    <property type="term" value="F:GTPase activity"/>
    <property type="evidence" value="ECO:0007669"/>
    <property type="project" value="UniProtKB-UniRule"/>
</dbReference>
<dbReference type="GO" id="GO:0003743">
    <property type="term" value="F:translation initiation factor activity"/>
    <property type="evidence" value="ECO:0007669"/>
    <property type="project" value="UniProtKB-UniRule"/>
</dbReference>
<dbReference type="CDD" id="cd01887">
    <property type="entry name" value="IF2_eIF5B"/>
    <property type="match status" value="1"/>
</dbReference>
<dbReference type="CDD" id="cd03702">
    <property type="entry name" value="IF2_mtIF2_II"/>
    <property type="match status" value="1"/>
</dbReference>
<dbReference type="CDD" id="cd03692">
    <property type="entry name" value="mtIF2_IVc"/>
    <property type="match status" value="1"/>
</dbReference>
<dbReference type="FunFam" id="2.40.30.10:FF:000007">
    <property type="entry name" value="Translation initiation factor IF-2"/>
    <property type="match status" value="1"/>
</dbReference>
<dbReference type="FunFam" id="2.40.30.10:FF:000008">
    <property type="entry name" value="Translation initiation factor IF-2"/>
    <property type="match status" value="1"/>
</dbReference>
<dbReference type="FunFam" id="3.40.50.10050:FF:000001">
    <property type="entry name" value="Translation initiation factor IF-2"/>
    <property type="match status" value="1"/>
</dbReference>
<dbReference type="FunFam" id="3.40.50.300:FF:000019">
    <property type="entry name" value="Translation initiation factor IF-2"/>
    <property type="match status" value="1"/>
</dbReference>
<dbReference type="Gene3D" id="1.10.10.2480">
    <property type="match status" value="1"/>
</dbReference>
<dbReference type="Gene3D" id="3.40.50.300">
    <property type="entry name" value="P-loop containing nucleotide triphosphate hydrolases"/>
    <property type="match status" value="1"/>
</dbReference>
<dbReference type="Gene3D" id="2.40.30.10">
    <property type="entry name" value="Translation factors"/>
    <property type="match status" value="2"/>
</dbReference>
<dbReference type="Gene3D" id="3.40.50.10050">
    <property type="entry name" value="Translation initiation factor IF- 2, domain 3"/>
    <property type="match status" value="1"/>
</dbReference>
<dbReference type="HAMAP" id="MF_00100_B">
    <property type="entry name" value="IF_2_B"/>
    <property type="match status" value="1"/>
</dbReference>
<dbReference type="InterPro" id="IPR053905">
    <property type="entry name" value="EF-G-like_DII"/>
</dbReference>
<dbReference type="InterPro" id="IPR004161">
    <property type="entry name" value="EFTu-like_2"/>
</dbReference>
<dbReference type="InterPro" id="IPR044145">
    <property type="entry name" value="IF2_II"/>
</dbReference>
<dbReference type="InterPro" id="IPR006847">
    <property type="entry name" value="IF2_N"/>
</dbReference>
<dbReference type="InterPro" id="IPR027417">
    <property type="entry name" value="P-loop_NTPase"/>
</dbReference>
<dbReference type="InterPro" id="IPR005225">
    <property type="entry name" value="Small_GTP-bd"/>
</dbReference>
<dbReference type="InterPro" id="IPR000795">
    <property type="entry name" value="T_Tr_GTP-bd_dom"/>
</dbReference>
<dbReference type="InterPro" id="IPR000178">
    <property type="entry name" value="TF_IF2_bacterial-like"/>
</dbReference>
<dbReference type="InterPro" id="IPR015760">
    <property type="entry name" value="TIF_IF2"/>
</dbReference>
<dbReference type="InterPro" id="IPR023115">
    <property type="entry name" value="TIF_IF2_dom3"/>
</dbReference>
<dbReference type="InterPro" id="IPR036925">
    <property type="entry name" value="TIF_IF2_dom3_sf"/>
</dbReference>
<dbReference type="InterPro" id="IPR009000">
    <property type="entry name" value="Transl_B-barrel_sf"/>
</dbReference>
<dbReference type="NCBIfam" id="TIGR00487">
    <property type="entry name" value="IF-2"/>
    <property type="match status" value="1"/>
</dbReference>
<dbReference type="NCBIfam" id="TIGR00231">
    <property type="entry name" value="small_GTP"/>
    <property type="match status" value="1"/>
</dbReference>
<dbReference type="PANTHER" id="PTHR43381:SF5">
    <property type="entry name" value="TR-TYPE G DOMAIN-CONTAINING PROTEIN"/>
    <property type="match status" value="1"/>
</dbReference>
<dbReference type="PANTHER" id="PTHR43381">
    <property type="entry name" value="TRANSLATION INITIATION FACTOR IF-2-RELATED"/>
    <property type="match status" value="1"/>
</dbReference>
<dbReference type="Pfam" id="PF22042">
    <property type="entry name" value="EF-G_D2"/>
    <property type="match status" value="1"/>
</dbReference>
<dbReference type="Pfam" id="PF00009">
    <property type="entry name" value="GTP_EFTU"/>
    <property type="match status" value="1"/>
</dbReference>
<dbReference type="Pfam" id="PF03144">
    <property type="entry name" value="GTP_EFTU_D2"/>
    <property type="match status" value="1"/>
</dbReference>
<dbReference type="Pfam" id="PF11987">
    <property type="entry name" value="IF-2"/>
    <property type="match status" value="1"/>
</dbReference>
<dbReference type="Pfam" id="PF04760">
    <property type="entry name" value="IF2_N"/>
    <property type="match status" value="2"/>
</dbReference>
<dbReference type="SUPFAM" id="SSF52156">
    <property type="entry name" value="Initiation factor IF2/eIF5b, domain 3"/>
    <property type="match status" value="1"/>
</dbReference>
<dbReference type="SUPFAM" id="SSF52540">
    <property type="entry name" value="P-loop containing nucleoside triphosphate hydrolases"/>
    <property type="match status" value="1"/>
</dbReference>
<dbReference type="SUPFAM" id="SSF50447">
    <property type="entry name" value="Translation proteins"/>
    <property type="match status" value="2"/>
</dbReference>
<dbReference type="PROSITE" id="PS51722">
    <property type="entry name" value="G_TR_2"/>
    <property type="match status" value="1"/>
</dbReference>
<dbReference type="PROSITE" id="PS01176">
    <property type="entry name" value="IF2"/>
    <property type="match status" value="1"/>
</dbReference>
<gene>
    <name evidence="2" type="primary">infB</name>
    <name type="ordered locus">MXAN_2068</name>
</gene>
<keyword id="KW-0963">Cytoplasm</keyword>
<keyword id="KW-0342">GTP-binding</keyword>
<keyword id="KW-0396">Initiation factor</keyword>
<keyword id="KW-0547">Nucleotide-binding</keyword>
<keyword id="KW-0648">Protein biosynthesis</keyword>
<keyword id="KW-1185">Reference proteome</keyword>
<comment type="function">
    <text evidence="2">One of the essential components for the initiation of protein synthesis. Protects formylmethionyl-tRNA from spontaneous hydrolysis and promotes its binding to the 30S ribosomal subunits. Also involved in the hydrolysis of GTP during the formation of the 70S ribosomal complex.</text>
</comment>
<comment type="subcellular location">
    <subcellularLocation>
        <location evidence="2">Cytoplasm</location>
    </subcellularLocation>
</comment>
<comment type="similarity">
    <text evidence="2">Belongs to the TRAFAC class translation factor GTPase superfamily. Classic translation factor GTPase family. IF-2 subfamily.</text>
</comment>
<name>IF2_MYXXD</name>